<accession>Q1R8V2</accession>
<proteinExistence type="inferred from homology"/>
<comment type="function">
    <text evidence="1">B6-vitamer kinase involved in the salvage pathway of pyridoxal 5'-phosphate (PLP). Catalyzes the phosphorylation of pyridoxine (PN), pyridoxal (PL), and pyridoxamine (PM), forming their respective 5'-phosphorylated esters, i.e. PNP, PLP and PMP.</text>
</comment>
<comment type="catalytic activity">
    <reaction evidence="1">
        <text>pyridoxal + ATP = pyridoxal 5'-phosphate + ADP + H(+)</text>
        <dbReference type="Rhea" id="RHEA:10224"/>
        <dbReference type="ChEBI" id="CHEBI:15378"/>
        <dbReference type="ChEBI" id="CHEBI:17310"/>
        <dbReference type="ChEBI" id="CHEBI:30616"/>
        <dbReference type="ChEBI" id="CHEBI:456216"/>
        <dbReference type="ChEBI" id="CHEBI:597326"/>
        <dbReference type="EC" id="2.7.1.35"/>
    </reaction>
</comment>
<comment type="catalytic activity">
    <reaction evidence="1">
        <text>pyridoxine + ATP = pyridoxine 5'-phosphate + ADP + H(+)</text>
        <dbReference type="Rhea" id="RHEA:25108"/>
        <dbReference type="ChEBI" id="CHEBI:15378"/>
        <dbReference type="ChEBI" id="CHEBI:16709"/>
        <dbReference type="ChEBI" id="CHEBI:30616"/>
        <dbReference type="ChEBI" id="CHEBI:58589"/>
        <dbReference type="ChEBI" id="CHEBI:456216"/>
        <dbReference type="EC" id="2.7.1.35"/>
    </reaction>
</comment>
<comment type="catalytic activity">
    <reaction evidence="1">
        <text>pyridoxamine + ATP = pyridoxamine 5'-phosphate + ADP + H(+)</text>
        <dbReference type="Rhea" id="RHEA:25104"/>
        <dbReference type="ChEBI" id="CHEBI:15378"/>
        <dbReference type="ChEBI" id="CHEBI:30616"/>
        <dbReference type="ChEBI" id="CHEBI:57761"/>
        <dbReference type="ChEBI" id="CHEBI:58451"/>
        <dbReference type="ChEBI" id="CHEBI:456216"/>
        <dbReference type="EC" id="2.7.1.35"/>
    </reaction>
</comment>
<comment type="cofactor">
    <cofactor evidence="1">
        <name>Mg(2+)</name>
        <dbReference type="ChEBI" id="CHEBI:18420"/>
    </cofactor>
</comment>
<comment type="pathway">
    <text evidence="1">Cofactor metabolism; pyridoxal 5'-phosphate salvage; pyridoxal 5'-phosphate from pyridoxal: step 1/1.</text>
</comment>
<comment type="pathway">
    <text evidence="1">Cofactor metabolism; pyridoxal 5'-phosphate salvage; pyridoxine 5'-phosphate from pyridoxine: step 1/1.</text>
</comment>
<comment type="pathway">
    <text evidence="1">Cofactor metabolism; pyridoxal 5'-phosphate salvage; pyridoxamine 5'-phosphate from pyridoxamine: step 1/1.</text>
</comment>
<comment type="subunit">
    <text evidence="1">Homodimer.</text>
</comment>
<comment type="similarity">
    <text evidence="1">Belongs to the pyridoxine kinase family. PdxK subfamily.</text>
</comment>
<reference key="1">
    <citation type="journal article" date="2006" name="Proc. Natl. Acad. Sci. U.S.A.">
        <title>Identification of genes subject to positive selection in uropathogenic strains of Escherichia coli: a comparative genomics approach.</title>
        <authorList>
            <person name="Chen S.L."/>
            <person name="Hung C.-S."/>
            <person name="Xu J."/>
            <person name="Reigstad C.S."/>
            <person name="Magrini V."/>
            <person name="Sabo A."/>
            <person name="Blasiar D."/>
            <person name="Bieri T."/>
            <person name="Meyer R.R."/>
            <person name="Ozersky P."/>
            <person name="Armstrong J.R."/>
            <person name="Fulton R.S."/>
            <person name="Latreille J.P."/>
            <person name="Spieth J."/>
            <person name="Hooton T.M."/>
            <person name="Mardis E.R."/>
            <person name="Hultgren S.J."/>
            <person name="Gordon J.I."/>
        </authorList>
    </citation>
    <scope>NUCLEOTIDE SEQUENCE [LARGE SCALE GENOMIC DNA]</scope>
    <source>
        <strain>UTI89 / UPEC</strain>
    </source>
</reference>
<gene>
    <name evidence="1" type="primary">pdxK</name>
    <name type="ordered locus">UTI89_C2752</name>
</gene>
<name>PDXK_ECOUT</name>
<keyword id="KW-0067">ATP-binding</keyword>
<keyword id="KW-0418">Kinase</keyword>
<keyword id="KW-0460">Magnesium</keyword>
<keyword id="KW-0479">Metal-binding</keyword>
<keyword id="KW-0547">Nucleotide-binding</keyword>
<keyword id="KW-0808">Transferase</keyword>
<keyword id="KW-0862">Zinc</keyword>
<evidence type="ECO:0000255" key="1">
    <source>
        <dbReference type="HAMAP-Rule" id="MF_01638"/>
    </source>
</evidence>
<feature type="chain" id="PRO_0000268835" description="Pyridoxine/pyridoxal/pyridoxamine kinase">
    <location>
        <begin position="1"/>
        <end position="283"/>
    </location>
</feature>
<feature type="binding site" evidence="1">
    <location>
        <position position="23"/>
    </location>
    <ligand>
        <name>substrate</name>
    </ligand>
</feature>
<feature type="binding site" evidence="1">
    <location>
        <position position="59"/>
    </location>
    <ligand>
        <name>substrate</name>
    </ligand>
</feature>
<feature type="binding site" evidence="1">
    <location>
        <position position="125"/>
    </location>
    <ligand>
        <name>ATP</name>
        <dbReference type="ChEBI" id="CHEBI:30616"/>
    </ligand>
</feature>
<feature type="binding site" evidence="1">
    <location>
        <position position="136"/>
    </location>
    <ligand>
        <name>Mg(2+)</name>
        <dbReference type="ChEBI" id="CHEBI:18420"/>
    </ligand>
</feature>
<feature type="binding site" evidence="1">
    <location>
        <position position="157"/>
    </location>
    <ligand>
        <name>ATP</name>
        <dbReference type="ChEBI" id="CHEBI:30616"/>
    </ligand>
</feature>
<feature type="binding site" evidence="1">
    <location>
        <position position="162"/>
    </location>
    <ligand>
        <name>ATP</name>
        <dbReference type="ChEBI" id="CHEBI:30616"/>
    </ligand>
</feature>
<feature type="binding site" evidence="1">
    <location>
        <position position="162"/>
    </location>
    <ligand>
        <name>Mg(2+)</name>
        <dbReference type="ChEBI" id="CHEBI:18420"/>
    </ligand>
</feature>
<feature type="binding site" evidence="1">
    <location>
        <position position="195"/>
    </location>
    <ligand>
        <name>ATP</name>
        <dbReference type="ChEBI" id="CHEBI:30616"/>
    </ligand>
</feature>
<feature type="binding site" evidence="1">
    <location>
        <begin position="221"/>
        <end position="224"/>
    </location>
    <ligand>
        <name>ATP</name>
        <dbReference type="ChEBI" id="CHEBI:30616"/>
    </ligand>
</feature>
<feature type="binding site" evidence="1">
    <location>
        <position position="231"/>
    </location>
    <ligand>
        <name>ATP</name>
        <dbReference type="ChEBI" id="CHEBI:30616"/>
    </ligand>
</feature>
<feature type="binding site" evidence="1">
    <location>
        <position position="233"/>
    </location>
    <ligand>
        <name>substrate</name>
    </ligand>
</feature>
<organism>
    <name type="scientific">Escherichia coli (strain UTI89 / UPEC)</name>
    <dbReference type="NCBI Taxonomy" id="364106"/>
    <lineage>
        <taxon>Bacteria</taxon>
        <taxon>Pseudomonadati</taxon>
        <taxon>Pseudomonadota</taxon>
        <taxon>Gammaproteobacteria</taxon>
        <taxon>Enterobacterales</taxon>
        <taxon>Enterobacteriaceae</taxon>
        <taxon>Escherichia</taxon>
    </lineage>
</organism>
<dbReference type="EC" id="2.7.1.35" evidence="1"/>
<dbReference type="EMBL" id="CP000243">
    <property type="protein sequence ID" value="ABE08212.1"/>
    <property type="molecule type" value="Genomic_DNA"/>
</dbReference>
<dbReference type="RefSeq" id="WP_000096640.1">
    <property type="nucleotide sequence ID" value="NZ_CP064825.1"/>
</dbReference>
<dbReference type="SMR" id="Q1R8V2"/>
<dbReference type="KEGG" id="eci:UTI89_C2752"/>
<dbReference type="HOGENOM" id="CLU_046496_3_1_6"/>
<dbReference type="UniPathway" id="UPA01068">
    <property type="reaction ID" value="UER00298"/>
</dbReference>
<dbReference type="UniPathway" id="UPA01068">
    <property type="reaction ID" value="UER00299"/>
</dbReference>
<dbReference type="UniPathway" id="UPA01068">
    <property type="reaction ID" value="UER00300"/>
</dbReference>
<dbReference type="Proteomes" id="UP000001952">
    <property type="component" value="Chromosome"/>
</dbReference>
<dbReference type="GO" id="GO:0005829">
    <property type="term" value="C:cytosol"/>
    <property type="evidence" value="ECO:0007669"/>
    <property type="project" value="TreeGrafter"/>
</dbReference>
<dbReference type="GO" id="GO:0005524">
    <property type="term" value="F:ATP binding"/>
    <property type="evidence" value="ECO:0007669"/>
    <property type="project" value="UniProtKB-UniRule"/>
</dbReference>
<dbReference type="GO" id="GO:0008902">
    <property type="term" value="F:hydroxymethylpyrimidine kinase activity"/>
    <property type="evidence" value="ECO:0007669"/>
    <property type="project" value="TreeGrafter"/>
</dbReference>
<dbReference type="GO" id="GO:0000287">
    <property type="term" value="F:magnesium ion binding"/>
    <property type="evidence" value="ECO:0007669"/>
    <property type="project" value="UniProtKB-UniRule"/>
</dbReference>
<dbReference type="GO" id="GO:0008478">
    <property type="term" value="F:pyridoxal kinase activity"/>
    <property type="evidence" value="ECO:0007669"/>
    <property type="project" value="UniProtKB-UniRule"/>
</dbReference>
<dbReference type="GO" id="GO:0008270">
    <property type="term" value="F:zinc ion binding"/>
    <property type="evidence" value="ECO:0007669"/>
    <property type="project" value="UniProtKB-UniRule"/>
</dbReference>
<dbReference type="GO" id="GO:0009443">
    <property type="term" value="P:pyridoxal 5'-phosphate salvage"/>
    <property type="evidence" value="ECO:0007669"/>
    <property type="project" value="UniProtKB-UniRule"/>
</dbReference>
<dbReference type="CDD" id="cd01173">
    <property type="entry name" value="pyridoxal_pyridoxamine_kinase"/>
    <property type="match status" value="1"/>
</dbReference>
<dbReference type="FunFam" id="3.40.1190.20:FF:000009">
    <property type="entry name" value="Pyridoxine/pyridoxal/pyridoxamine kinase"/>
    <property type="match status" value="1"/>
</dbReference>
<dbReference type="Gene3D" id="3.40.1190.20">
    <property type="match status" value="1"/>
</dbReference>
<dbReference type="HAMAP" id="MF_01638">
    <property type="entry name" value="PdxK"/>
    <property type="match status" value="1"/>
</dbReference>
<dbReference type="InterPro" id="IPR023479">
    <property type="entry name" value="PdxK"/>
</dbReference>
<dbReference type="InterPro" id="IPR013749">
    <property type="entry name" value="PM/HMP-P_kinase-1"/>
</dbReference>
<dbReference type="InterPro" id="IPR004625">
    <property type="entry name" value="PyrdxlKinase"/>
</dbReference>
<dbReference type="InterPro" id="IPR029056">
    <property type="entry name" value="Ribokinase-like"/>
</dbReference>
<dbReference type="NCBIfam" id="NF006034">
    <property type="entry name" value="PRK08176.1"/>
    <property type="match status" value="1"/>
</dbReference>
<dbReference type="NCBIfam" id="TIGR00687">
    <property type="entry name" value="pyridox_kin"/>
    <property type="match status" value="1"/>
</dbReference>
<dbReference type="PANTHER" id="PTHR10534">
    <property type="entry name" value="PYRIDOXAL KINASE"/>
    <property type="match status" value="1"/>
</dbReference>
<dbReference type="PANTHER" id="PTHR10534:SF15">
    <property type="entry name" value="PYRIDOXINE_PYRIDOXAL_PYRIDOXAMINE KINASE"/>
    <property type="match status" value="1"/>
</dbReference>
<dbReference type="Pfam" id="PF08543">
    <property type="entry name" value="Phos_pyr_kin"/>
    <property type="match status" value="1"/>
</dbReference>
<dbReference type="SUPFAM" id="SSF53613">
    <property type="entry name" value="Ribokinase-like"/>
    <property type="match status" value="1"/>
</dbReference>
<protein>
    <recommendedName>
        <fullName evidence="1">Pyridoxine/pyridoxal/pyridoxamine kinase</fullName>
        <shortName evidence="1">PN/PL/PM kinase</shortName>
        <ecNumber evidence="1">2.7.1.35</ecNumber>
    </recommendedName>
    <alternativeName>
        <fullName evidence="1">B6-vitamer kinase</fullName>
    </alternativeName>
</protein>
<sequence>MSSLLLFNDKSRALQADIVAVQSQVVYGSVGNSIAVPAIKQNGLNVFAVPTVLLSNTPHYDTFYGGAIPDEWFSGYLRALQERDALRQLRAVTTGYMGTASQIKILAEWLTALRKDHPDLLIMVDPVIGDIDSGIYVKPDLPEAYRQYLLPLAQGITPNIFELEILTGKDCRDLDSAIAAAKSLLSDTLKWVVITSASGNEENQEMQVVVVSADSVNVISHSRVKTDLKGTGDLFCAQLISGLLKGKALTDAVHRAGLRVLEVMRYTQQHESDELILPPLAEA</sequence>